<proteinExistence type="evidence at protein level"/>
<feature type="initiator methionine" description="Removed" evidence="2 10">
    <location>
        <position position="1"/>
    </location>
</feature>
<feature type="chain" id="PRO_0000056419" description="Aldehyde dehydrogenase 1A1">
    <location>
        <begin position="2"/>
        <end position="501"/>
    </location>
</feature>
<feature type="region of interest" description="Mediates interaction with PRMT3" evidence="1">
    <location>
        <begin position="336"/>
        <end position="501"/>
    </location>
</feature>
<feature type="active site" description="Proton acceptor" evidence="7 8">
    <location>
        <position position="269"/>
    </location>
</feature>
<feature type="active site" description="Nucleophile" evidence="7 8">
    <location>
        <position position="303"/>
    </location>
</feature>
<feature type="binding site" evidence="1">
    <location>
        <begin position="167"/>
        <end position="170"/>
    </location>
    <ligand>
        <name>NAD(+)</name>
        <dbReference type="ChEBI" id="CHEBI:57540"/>
    </ligand>
</feature>
<feature type="binding site" evidence="1">
    <location>
        <begin position="193"/>
        <end position="196"/>
    </location>
    <ligand>
        <name>NAD(+)</name>
        <dbReference type="ChEBI" id="CHEBI:57540"/>
    </ligand>
</feature>
<feature type="binding site" evidence="1">
    <location>
        <begin position="226"/>
        <end position="227"/>
    </location>
    <ligand>
        <name>NAD(+)</name>
        <dbReference type="ChEBI" id="CHEBI:57540"/>
    </ligand>
</feature>
<feature type="binding site" evidence="1">
    <location>
        <begin position="246"/>
        <end position="247"/>
    </location>
    <ligand>
        <name>NAD(+)</name>
        <dbReference type="ChEBI" id="CHEBI:57540"/>
    </ligand>
</feature>
<feature type="binding site" evidence="1">
    <location>
        <begin position="269"/>
        <end position="271"/>
    </location>
    <ligand>
        <name>NAD(+)</name>
        <dbReference type="ChEBI" id="CHEBI:57540"/>
    </ligand>
</feature>
<feature type="binding site" evidence="1">
    <location>
        <begin position="349"/>
        <end position="353"/>
    </location>
    <ligand>
        <name>NAD(+)</name>
        <dbReference type="ChEBI" id="CHEBI:57540"/>
    </ligand>
</feature>
<feature type="binding site" evidence="1">
    <location>
        <begin position="400"/>
        <end position="402"/>
    </location>
    <ligand>
        <name>NAD(+)</name>
        <dbReference type="ChEBI" id="CHEBI:57540"/>
    </ligand>
</feature>
<feature type="site" description="Transition state stabilizer" evidence="3">
    <location>
        <position position="170"/>
    </location>
</feature>
<feature type="modified residue" description="N-acetylserine" evidence="2">
    <location>
        <position position="2"/>
    </location>
</feature>
<feature type="modified residue" description="N6-acetyllysine" evidence="1">
    <location>
        <position position="91"/>
    </location>
</feature>
<feature type="modified residue" description="N6-acetyllysine" evidence="1">
    <location>
        <position position="128"/>
    </location>
</feature>
<feature type="modified residue" description="N6-acetyllysine" evidence="1">
    <location>
        <position position="252"/>
    </location>
</feature>
<feature type="modified residue" description="Phosphothreonine" evidence="1">
    <location>
        <position position="337"/>
    </location>
</feature>
<feature type="modified residue" description="N6-acetyllysine" evidence="1">
    <location>
        <position position="353"/>
    </location>
</feature>
<feature type="modified residue" description="N6-acetyllysine" evidence="1">
    <location>
        <position position="367"/>
    </location>
</feature>
<feature type="modified residue" description="N6-acetyllysine" evidence="1">
    <location>
        <position position="410"/>
    </location>
</feature>
<feature type="modified residue" description="Phosphoserine" evidence="17">
    <location>
        <position position="413"/>
    </location>
</feature>
<feature type="modified residue" description="N6-acetyllysine" evidence="1">
    <location>
        <position position="419"/>
    </location>
</feature>
<feature type="modified residue" description="N6-acetyllysine" evidence="1">
    <location>
        <position position="435"/>
    </location>
</feature>
<feature type="modified residue" description="N6-acetyllysine" evidence="1">
    <location>
        <position position="495"/>
    </location>
</feature>
<feature type="sequence conflict" description="In Ref. 1; AAA96657." evidence="14" ref="1">
    <original>R</original>
    <variation>C</variation>
    <location>
        <position position="100"/>
    </location>
</feature>
<feature type="sequence conflict" description="In Ref. 6; AA sequence." evidence="14" ref="6">
    <original>I</original>
    <variation>M</variation>
    <location>
        <position position="106"/>
    </location>
</feature>
<feature type="sequence conflict" description="In Ref. 1; AAA96657." evidence="14" ref="1">
    <original>N</original>
    <variation>E</variation>
    <location>
        <position position="170"/>
    </location>
</feature>
<gene>
    <name evidence="16" type="primary">Aldh1a1</name>
    <name evidence="12" type="synonym">Aldh</name>
</gene>
<organism>
    <name type="scientific">Rattus norvegicus</name>
    <name type="common">Rat</name>
    <dbReference type="NCBI Taxonomy" id="10116"/>
    <lineage>
        <taxon>Eukaryota</taxon>
        <taxon>Metazoa</taxon>
        <taxon>Chordata</taxon>
        <taxon>Craniata</taxon>
        <taxon>Vertebrata</taxon>
        <taxon>Euteleostomi</taxon>
        <taxon>Mammalia</taxon>
        <taxon>Eutheria</taxon>
        <taxon>Euarchontoglires</taxon>
        <taxon>Glires</taxon>
        <taxon>Rodentia</taxon>
        <taxon>Myomorpha</taxon>
        <taxon>Muroidea</taxon>
        <taxon>Muridae</taxon>
        <taxon>Murinae</taxon>
        <taxon>Rattus</taxon>
    </lineage>
</organism>
<dbReference type="EC" id="1.2.1.19" evidence="4"/>
<dbReference type="EC" id="1.2.1.28" evidence="1"/>
<dbReference type="EC" id="1.2.1.3" evidence="10"/>
<dbReference type="EC" id="1.2.1.36" evidence="10"/>
<dbReference type="EMBL" id="L42009">
    <property type="protein sequence ID" value="AAA96657.1"/>
    <property type="molecule type" value="mRNA"/>
</dbReference>
<dbReference type="EMBL" id="AF001896">
    <property type="protein sequence ID" value="AAC53304.1"/>
    <property type="molecule type" value="mRNA"/>
</dbReference>
<dbReference type="EMBL" id="AF001898">
    <property type="protein sequence ID" value="AAC53306.1"/>
    <property type="molecule type" value="mRNA"/>
</dbReference>
<dbReference type="EMBL" id="AF001897">
    <property type="protein sequence ID" value="AAC53305.1"/>
    <property type="molecule type" value="mRNA"/>
</dbReference>
<dbReference type="EMBL" id="U79118">
    <property type="protein sequence ID" value="AAB63423.1"/>
    <property type="molecule type" value="mRNA"/>
</dbReference>
<dbReference type="EMBL" id="BC061526">
    <property type="protein sequence ID" value="AAH61526.1"/>
    <property type="molecule type" value="mRNA"/>
</dbReference>
<dbReference type="PIR" id="JC4524">
    <property type="entry name" value="JC4524"/>
</dbReference>
<dbReference type="PIR" id="JC5553">
    <property type="entry name" value="JC5553"/>
</dbReference>
<dbReference type="RefSeq" id="NP_071852.2">
    <property type="nucleotide sequence ID" value="NM_022407.3"/>
</dbReference>
<dbReference type="RefSeq" id="XP_038949859.1">
    <property type="nucleotide sequence ID" value="XM_039093931.2"/>
</dbReference>
<dbReference type="RefSeq" id="XP_038949895.1">
    <property type="nucleotide sequence ID" value="XM_039093967.2"/>
</dbReference>
<dbReference type="SMR" id="P51647"/>
<dbReference type="FunCoup" id="P51647">
    <property type="interactions" value="508"/>
</dbReference>
<dbReference type="STRING" id="10116.ENSRNOP00000024000"/>
<dbReference type="BindingDB" id="P51647"/>
<dbReference type="ChEMBL" id="CHEMBL2931"/>
<dbReference type="SwissLipids" id="SLP:000000800"/>
<dbReference type="GlyGen" id="P51647">
    <property type="glycosylation" value="2 sites, 1 O-linked glycan (1 site)"/>
</dbReference>
<dbReference type="iPTMnet" id="P51647"/>
<dbReference type="PhosphoSitePlus" id="P51647"/>
<dbReference type="SwissPalm" id="P51647"/>
<dbReference type="PaxDb" id="10116-ENSRNOP00000024000"/>
<dbReference type="GeneID" id="24188"/>
<dbReference type="KEGG" id="rno:24188"/>
<dbReference type="UCSC" id="RGD:2087">
    <property type="organism name" value="rat"/>
</dbReference>
<dbReference type="AGR" id="RGD:2087"/>
<dbReference type="CTD" id="216"/>
<dbReference type="RGD" id="2087">
    <property type="gene designation" value="Aldh1a1"/>
</dbReference>
<dbReference type="eggNOG" id="KOG2450">
    <property type="taxonomic scope" value="Eukaryota"/>
</dbReference>
<dbReference type="HOGENOM" id="CLU_005391_0_2_1"/>
<dbReference type="InParanoid" id="P51647"/>
<dbReference type="PhylomeDB" id="P51647"/>
<dbReference type="TreeFam" id="TF300455"/>
<dbReference type="BRENDA" id="1.2.1.36">
    <property type="organism ID" value="5301"/>
</dbReference>
<dbReference type="Reactome" id="R-RNO-5365859">
    <property type="pathway name" value="RA biosynthesis pathway"/>
</dbReference>
<dbReference type="Reactome" id="R-RNO-70350">
    <property type="pathway name" value="Fructose catabolism"/>
</dbReference>
<dbReference type="Reactome" id="R-RNO-71384">
    <property type="pathway name" value="Ethanol oxidation"/>
</dbReference>
<dbReference type="SABIO-RK" id="P51647"/>
<dbReference type="UniPathway" id="UPA00912"/>
<dbReference type="PRO" id="PR:P51647"/>
<dbReference type="Proteomes" id="UP000002494">
    <property type="component" value="Unplaced"/>
</dbReference>
<dbReference type="GO" id="GO:0030424">
    <property type="term" value="C:axon"/>
    <property type="evidence" value="ECO:0000250"/>
    <property type="project" value="UniProtKB"/>
</dbReference>
<dbReference type="GO" id="GO:0005829">
    <property type="term" value="C:cytosol"/>
    <property type="evidence" value="ECO:0000250"/>
    <property type="project" value="UniProtKB"/>
</dbReference>
<dbReference type="GO" id="GO:0045202">
    <property type="term" value="C:synapse"/>
    <property type="evidence" value="ECO:0000250"/>
    <property type="project" value="UniProtKB"/>
</dbReference>
<dbReference type="GO" id="GO:0004028">
    <property type="term" value="F:3-chloroallyl aldehyde dehydrogenase activity"/>
    <property type="evidence" value="ECO:0000266"/>
    <property type="project" value="RGD"/>
</dbReference>
<dbReference type="GO" id="GO:0106373">
    <property type="term" value="F:3-deoxyglucosone dehydrogenase activity"/>
    <property type="evidence" value="ECO:0000250"/>
    <property type="project" value="UniProtKB"/>
</dbReference>
<dbReference type="GO" id="GO:0140087">
    <property type="term" value="F:acetaldehyde dehydrogenase (NAD+) activity"/>
    <property type="evidence" value="ECO:0007669"/>
    <property type="project" value="RHEA"/>
</dbReference>
<dbReference type="GO" id="GO:0004029">
    <property type="term" value="F:aldehyde dehydrogenase (NAD+) activity"/>
    <property type="evidence" value="ECO:0000314"/>
    <property type="project" value="RGD"/>
</dbReference>
<dbReference type="GO" id="GO:0019145">
    <property type="term" value="F:aminobutyraldehyde dehydrogenase (NAD+) activity"/>
    <property type="evidence" value="ECO:0000250"/>
    <property type="project" value="UniProtKB"/>
</dbReference>
<dbReference type="GO" id="GO:0018479">
    <property type="term" value="F:benzaldehyde dehydrogenase (NAD+) activity"/>
    <property type="evidence" value="ECO:0000314"/>
    <property type="project" value="RGD"/>
</dbReference>
<dbReference type="GO" id="GO:0042802">
    <property type="term" value="F:identical protein binding"/>
    <property type="evidence" value="ECO:0000353"/>
    <property type="project" value="RGD"/>
</dbReference>
<dbReference type="GO" id="GO:0051287">
    <property type="term" value="F:NAD binding"/>
    <property type="evidence" value="ECO:0000250"/>
    <property type="project" value="CAFA"/>
</dbReference>
<dbReference type="GO" id="GO:0001758">
    <property type="term" value="F:retinal dehydrogenase activity"/>
    <property type="evidence" value="ECO:0000314"/>
    <property type="project" value="UniProtKB"/>
</dbReference>
<dbReference type="GO" id="GO:0042904">
    <property type="term" value="P:9-cis-retinoic acid biosynthetic process"/>
    <property type="evidence" value="ECO:0000266"/>
    <property type="project" value="RGD"/>
</dbReference>
<dbReference type="GO" id="GO:0042905">
    <property type="term" value="P:9-cis-retinoic acid metabolic process"/>
    <property type="evidence" value="ECO:0000314"/>
    <property type="project" value="RGD"/>
</dbReference>
<dbReference type="GO" id="GO:0006915">
    <property type="term" value="P:apoptotic process"/>
    <property type="evidence" value="ECO:0000266"/>
    <property type="project" value="RGD"/>
</dbReference>
<dbReference type="GO" id="GO:0110095">
    <property type="term" value="P:cellular detoxification of aldehyde"/>
    <property type="evidence" value="ECO:0000315"/>
    <property type="project" value="UniProtKB"/>
</dbReference>
<dbReference type="GO" id="GO:0048048">
    <property type="term" value="P:embryonic eye morphogenesis"/>
    <property type="evidence" value="ECO:0000266"/>
    <property type="project" value="RGD"/>
</dbReference>
<dbReference type="GO" id="GO:0044849">
    <property type="term" value="P:estrous cycle"/>
    <property type="evidence" value="ECO:0000270"/>
    <property type="project" value="RGD"/>
</dbReference>
<dbReference type="GO" id="GO:0030392">
    <property type="term" value="P:fructosamine catabolic process"/>
    <property type="evidence" value="ECO:0000250"/>
    <property type="project" value="UniProtKB"/>
</dbReference>
<dbReference type="GO" id="GO:0006001">
    <property type="term" value="P:fructose catabolic process"/>
    <property type="evidence" value="ECO:0000266"/>
    <property type="project" value="RGD"/>
</dbReference>
<dbReference type="GO" id="GO:0009449">
    <property type="term" value="P:gamma-aminobutyric acid biosynthetic process"/>
    <property type="evidence" value="ECO:0000250"/>
    <property type="project" value="UniProtKB"/>
</dbReference>
<dbReference type="GO" id="GO:0001822">
    <property type="term" value="P:kidney development"/>
    <property type="evidence" value="ECO:0000270"/>
    <property type="project" value="RGD"/>
</dbReference>
<dbReference type="GO" id="GO:0001889">
    <property type="term" value="P:liver development"/>
    <property type="evidence" value="ECO:0000270"/>
    <property type="project" value="RGD"/>
</dbReference>
<dbReference type="GO" id="GO:0036438">
    <property type="term" value="P:maintenance of lens transparency"/>
    <property type="evidence" value="ECO:0000315"/>
    <property type="project" value="UniProtKB"/>
</dbReference>
<dbReference type="GO" id="GO:0007494">
    <property type="term" value="P:midgut development"/>
    <property type="evidence" value="ECO:0000270"/>
    <property type="project" value="RGD"/>
</dbReference>
<dbReference type="GO" id="GO:0120163">
    <property type="term" value="P:negative regulation of cold-induced thermogenesis"/>
    <property type="evidence" value="ECO:0000250"/>
    <property type="project" value="YuBioLab"/>
</dbReference>
<dbReference type="GO" id="GO:0002072">
    <property type="term" value="P:optic cup morphogenesis involved in camera-type eye development"/>
    <property type="evidence" value="ECO:0000266"/>
    <property type="project" value="RGD"/>
</dbReference>
<dbReference type="GO" id="GO:0043065">
    <property type="term" value="P:positive regulation of apoptotic process"/>
    <property type="evidence" value="ECO:0000266"/>
    <property type="project" value="RGD"/>
</dbReference>
<dbReference type="GO" id="GO:0032355">
    <property type="term" value="P:response to estradiol"/>
    <property type="evidence" value="ECO:0000270"/>
    <property type="project" value="RGD"/>
</dbReference>
<dbReference type="GO" id="GO:0045471">
    <property type="term" value="P:response to ethanol"/>
    <property type="evidence" value="ECO:0000314"/>
    <property type="project" value="RGD"/>
</dbReference>
<dbReference type="GO" id="GO:0006979">
    <property type="term" value="P:response to oxidative stress"/>
    <property type="evidence" value="ECO:0000315"/>
    <property type="project" value="RGD"/>
</dbReference>
<dbReference type="GO" id="GO:0032526">
    <property type="term" value="P:response to retinoic acid"/>
    <property type="evidence" value="ECO:0000270"/>
    <property type="project" value="RGD"/>
</dbReference>
<dbReference type="GO" id="GO:0009410">
    <property type="term" value="P:response to xenobiotic stimulus"/>
    <property type="evidence" value="ECO:0000270"/>
    <property type="project" value="RGD"/>
</dbReference>
<dbReference type="GO" id="GO:0002138">
    <property type="term" value="P:retinoic acid biosynthetic process"/>
    <property type="evidence" value="ECO:0000315"/>
    <property type="project" value="RGD"/>
</dbReference>
<dbReference type="GO" id="GO:0042573">
    <property type="term" value="P:retinoic acid metabolic process"/>
    <property type="evidence" value="ECO:0000266"/>
    <property type="project" value="RGD"/>
</dbReference>
<dbReference type="GO" id="GO:0001523">
    <property type="term" value="P:retinoid metabolic process"/>
    <property type="evidence" value="ECO:0000314"/>
    <property type="project" value="UniProtKB"/>
</dbReference>
<dbReference type="GO" id="GO:0042572">
    <property type="term" value="P:retinol metabolic process"/>
    <property type="evidence" value="ECO:0000266"/>
    <property type="project" value="RGD"/>
</dbReference>
<dbReference type="CDD" id="cd07141">
    <property type="entry name" value="ALDH_F1AB_F2_RALDH1"/>
    <property type="match status" value="1"/>
</dbReference>
<dbReference type="FunFam" id="3.40.605.10:FF:000029">
    <property type="entry name" value="Aldehyde dehydrogenase, mitochondrial"/>
    <property type="match status" value="1"/>
</dbReference>
<dbReference type="FunFam" id="3.40.605.10:FF:000026">
    <property type="entry name" value="Aldehyde dehydrogenase, putative"/>
    <property type="match status" value="1"/>
</dbReference>
<dbReference type="FunFam" id="3.40.309.10:FF:000001">
    <property type="entry name" value="Mitochondrial aldehyde dehydrogenase 2"/>
    <property type="match status" value="1"/>
</dbReference>
<dbReference type="Gene3D" id="3.40.605.10">
    <property type="entry name" value="Aldehyde Dehydrogenase, Chain A, domain 1"/>
    <property type="match status" value="1"/>
</dbReference>
<dbReference type="Gene3D" id="3.40.309.10">
    <property type="entry name" value="Aldehyde Dehydrogenase, Chain A, domain 2"/>
    <property type="match status" value="1"/>
</dbReference>
<dbReference type="InterPro" id="IPR016161">
    <property type="entry name" value="Ald_DH/histidinol_DH"/>
</dbReference>
<dbReference type="InterPro" id="IPR016163">
    <property type="entry name" value="Ald_DH_C"/>
</dbReference>
<dbReference type="InterPro" id="IPR016160">
    <property type="entry name" value="Ald_DH_CS_CYS"/>
</dbReference>
<dbReference type="InterPro" id="IPR029510">
    <property type="entry name" value="Ald_DH_CS_GLU"/>
</dbReference>
<dbReference type="InterPro" id="IPR016162">
    <property type="entry name" value="Ald_DH_N"/>
</dbReference>
<dbReference type="InterPro" id="IPR015590">
    <property type="entry name" value="Aldehyde_DH_dom"/>
</dbReference>
<dbReference type="PANTHER" id="PTHR11699">
    <property type="entry name" value="ALDEHYDE DEHYDROGENASE-RELATED"/>
    <property type="match status" value="1"/>
</dbReference>
<dbReference type="Pfam" id="PF00171">
    <property type="entry name" value="Aldedh"/>
    <property type="match status" value="1"/>
</dbReference>
<dbReference type="SUPFAM" id="SSF53720">
    <property type="entry name" value="ALDH-like"/>
    <property type="match status" value="1"/>
</dbReference>
<dbReference type="PROSITE" id="PS00070">
    <property type="entry name" value="ALDEHYDE_DEHYDR_CYS"/>
    <property type="match status" value="1"/>
</dbReference>
<dbReference type="PROSITE" id="PS00687">
    <property type="entry name" value="ALDEHYDE_DEHYDR_GLU"/>
    <property type="match status" value="1"/>
</dbReference>
<comment type="function">
    <text evidence="1 4 9 10">Cytosolic dehydrogenase that catalyzes the irreversible oxidation of a wide range of aldehydes to their corresponding carboxylic acid (PubMed:15623782, PubMed:7832787). Functions downstream of retinol dehydrogenases and catalyzes the oxidation of retinaldehyde into retinoic acid, the second step in the oxidation of retinol/vitamin A into retinoic acid. This pathway is crucial to control the levels of retinol and retinoic acid, two important molecules which excess can be teratogenic and cytotoxic (PubMed:7832787). Also oxidizes aldehydes resulting from lipid peroxidation like (E)-4-hydroxynon-2-enal/HNE, malonaldehyde and hexanal that form protein adducts and are highly cytotoxic. By participating for instance to the clearance of (E)-4-hydroxynon-2-enal/HNE in the lens epithelium prevents the formation of HNE-protein adducts and lens opacification (PubMed:15623782). Functions also downstream of fructosamine-3-kinase in the fructosamine degradation pathway by catalyzing the oxidation of 3-deoxyglucosone, the carbohydrate product of fructosamine 3-phosphate decomposition, which is itself a potent glycating agent that may react with lysine and arginine side-chains of proteins (By similarity). Also has an aminobutyraldehyde dehydrogenase activity and is probably part of an alternative pathway for the biosynthesis of GABA/4-aminobutanoate in midbrain, thereby playing a role in GABAergic synaptic transmission (By similarity).</text>
</comment>
<comment type="catalytic activity">
    <reaction evidence="10">
        <text>an aldehyde + NAD(+) + H2O = a carboxylate + NADH + 2 H(+)</text>
        <dbReference type="Rhea" id="RHEA:16185"/>
        <dbReference type="ChEBI" id="CHEBI:15377"/>
        <dbReference type="ChEBI" id="CHEBI:15378"/>
        <dbReference type="ChEBI" id="CHEBI:17478"/>
        <dbReference type="ChEBI" id="CHEBI:29067"/>
        <dbReference type="ChEBI" id="CHEBI:57540"/>
        <dbReference type="ChEBI" id="CHEBI:57945"/>
        <dbReference type="EC" id="1.2.1.3"/>
    </reaction>
    <physiologicalReaction direction="left-to-right" evidence="15">
        <dbReference type="Rhea" id="RHEA:16186"/>
    </physiologicalReaction>
</comment>
<comment type="catalytic activity">
    <reaction evidence="10">
        <text>all-trans-retinal + NAD(+) + H2O = all-trans-retinoate + NADH + 2 H(+)</text>
        <dbReference type="Rhea" id="RHEA:42080"/>
        <dbReference type="ChEBI" id="CHEBI:15377"/>
        <dbReference type="ChEBI" id="CHEBI:15378"/>
        <dbReference type="ChEBI" id="CHEBI:17898"/>
        <dbReference type="ChEBI" id="CHEBI:35291"/>
        <dbReference type="ChEBI" id="CHEBI:57540"/>
        <dbReference type="ChEBI" id="CHEBI:57945"/>
        <dbReference type="EC" id="1.2.1.36"/>
    </reaction>
    <physiologicalReaction direction="left-to-right" evidence="15">
        <dbReference type="Rhea" id="RHEA:42081"/>
    </physiologicalReaction>
</comment>
<comment type="catalytic activity">
    <reaction evidence="10">
        <text>9-cis-retinal + NAD(+) + H2O = 9-cis-retinoate + NADH + 2 H(+)</text>
        <dbReference type="Rhea" id="RHEA:42084"/>
        <dbReference type="ChEBI" id="CHEBI:15377"/>
        <dbReference type="ChEBI" id="CHEBI:15378"/>
        <dbReference type="ChEBI" id="CHEBI:57540"/>
        <dbReference type="ChEBI" id="CHEBI:57945"/>
        <dbReference type="ChEBI" id="CHEBI:78273"/>
        <dbReference type="ChEBI" id="CHEBI:78630"/>
    </reaction>
    <physiologicalReaction direction="left-to-right" evidence="15">
        <dbReference type="Rhea" id="RHEA:42085"/>
    </physiologicalReaction>
</comment>
<comment type="catalytic activity">
    <reaction evidence="10">
        <text>11-cis-retinal + NAD(+) + H2O = 11-cis-retinoate + NADH + 2 H(+)</text>
        <dbReference type="Rhea" id="RHEA:47132"/>
        <dbReference type="ChEBI" id="CHEBI:15377"/>
        <dbReference type="ChEBI" id="CHEBI:15378"/>
        <dbReference type="ChEBI" id="CHEBI:16066"/>
        <dbReference type="ChEBI" id="CHEBI:57540"/>
        <dbReference type="ChEBI" id="CHEBI:57945"/>
        <dbReference type="ChEBI" id="CHEBI:87435"/>
    </reaction>
    <physiologicalReaction direction="left-to-right" evidence="15">
        <dbReference type="Rhea" id="RHEA:47133"/>
    </physiologicalReaction>
</comment>
<comment type="catalytic activity">
    <reaction evidence="6">
        <text>13-cis-retinal + NAD(+) + H2O = 13-cis-retinoate + NADH + 2 H(+)</text>
        <dbReference type="Rhea" id="RHEA:67332"/>
        <dbReference type="ChEBI" id="CHEBI:15377"/>
        <dbReference type="ChEBI" id="CHEBI:15378"/>
        <dbReference type="ChEBI" id="CHEBI:45487"/>
        <dbReference type="ChEBI" id="CHEBI:57540"/>
        <dbReference type="ChEBI" id="CHEBI:57945"/>
        <dbReference type="ChEBI" id="CHEBI:169952"/>
    </reaction>
    <physiologicalReaction direction="left-to-right" evidence="6">
        <dbReference type="Rhea" id="RHEA:67333"/>
    </physiologicalReaction>
</comment>
<comment type="catalytic activity">
    <reaction evidence="1">
        <text>3-deoxyglucosone + NAD(+) + H2O = 2-dehydro-3-deoxy-D-gluconate + NADH + 2 H(+)</text>
        <dbReference type="Rhea" id="RHEA:67244"/>
        <dbReference type="ChEBI" id="CHEBI:15377"/>
        <dbReference type="ChEBI" id="CHEBI:15378"/>
        <dbReference type="ChEBI" id="CHEBI:57540"/>
        <dbReference type="ChEBI" id="CHEBI:57945"/>
        <dbReference type="ChEBI" id="CHEBI:57990"/>
        <dbReference type="ChEBI" id="CHEBI:60777"/>
    </reaction>
    <physiologicalReaction direction="left-to-right" evidence="1">
        <dbReference type="Rhea" id="RHEA:67245"/>
    </physiologicalReaction>
</comment>
<comment type="catalytic activity">
    <reaction evidence="1">
        <text>(E)-4-hydroxynon-2-enal + NAD(+) + H2O = (E)-4-hydroxynon-2-enoate + NADH + 2 H(+)</text>
        <dbReference type="Rhea" id="RHEA:67248"/>
        <dbReference type="ChEBI" id="CHEBI:15377"/>
        <dbReference type="ChEBI" id="CHEBI:15378"/>
        <dbReference type="ChEBI" id="CHEBI:57540"/>
        <dbReference type="ChEBI" id="CHEBI:57945"/>
        <dbReference type="ChEBI" id="CHEBI:58968"/>
        <dbReference type="ChEBI" id="CHEBI:142920"/>
    </reaction>
    <physiologicalReaction direction="left-to-right" evidence="1">
        <dbReference type="Rhea" id="RHEA:67249"/>
    </physiologicalReaction>
</comment>
<comment type="catalytic activity">
    <reaction evidence="1">
        <text>malonaldehyde + NAD(+) + H2O = 3-oxopropanoate + NADH + 2 H(+)</text>
        <dbReference type="Rhea" id="RHEA:67252"/>
        <dbReference type="ChEBI" id="CHEBI:15377"/>
        <dbReference type="ChEBI" id="CHEBI:15378"/>
        <dbReference type="ChEBI" id="CHEBI:33190"/>
        <dbReference type="ChEBI" id="CHEBI:57540"/>
        <dbReference type="ChEBI" id="CHEBI:57945"/>
        <dbReference type="ChEBI" id="CHEBI:566274"/>
    </reaction>
    <physiologicalReaction direction="left-to-right" evidence="1">
        <dbReference type="Rhea" id="RHEA:67253"/>
    </physiologicalReaction>
</comment>
<comment type="catalytic activity">
    <reaction evidence="1">
        <text>hexanal + NAD(+) + H2O = hexanoate + NADH + 2 H(+)</text>
        <dbReference type="Rhea" id="RHEA:67276"/>
        <dbReference type="ChEBI" id="CHEBI:15377"/>
        <dbReference type="ChEBI" id="CHEBI:15378"/>
        <dbReference type="ChEBI" id="CHEBI:17120"/>
        <dbReference type="ChEBI" id="CHEBI:57540"/>
        <dbReference type="ChEBI" id="CHEBI:57945"/>
        <dbReference type="ChEBI" id="CHEBI:88528"/>
    </reaction>
    <physiologicalReaction direction="left-to-right" evidence="1">
        <dbReference type="Rhea" id="RHEA:67277"/>
    </physiologicalReaction>
</comment>
<comment type="catalytic activity">
    <reaction evidence="1">
        <text>propanal + NAD(+) + H2O = propanoate + NADH + 2 H(+)</text>
        <dbReference type="Rhea" id="RHEA:67256"/>
        <dbReference type="ChEBI" id="CHEBI:15377"/>
        <dbReference type="ChEBI" id="CHEBI:15378"/>
        <dbReference type="ChEBI" id="CHEBI:17153"/>
        <dbReference type="ChEBI" id="CHEBI:17272"/>
        <dbReference type="ChEBI" id="CHEBI:57540"/>
        <dbReference type="ChEBI" id="CHEBI:57945"/>
    </reaction>
    <physiologicalReaction direction="left-to-right" evidence="1">
        <dbReference type="Rhea" id="RHEA:67257"/>
    </physiologicalReaction>
</comment>
<comment type="catalytic activity">
    <reaction evidence="1">
        <text>acetaldehyde + NAD(+) + H2O = acetate + NADH + 2 H(+)</text>
        <dbReference type="Rhea" id="RHEA:25294"/>
        <dbReference type="ChEBI" id="CHEBI:15343"/>
        <dbReference type="ChEBI" id="CHEBI:15377"/>
        <dbReference type="ChEBI" id="CHEBI:15378"/>
        <dbReference type="ChEBI" id="CHEBI:30089"/>
        <dbReference type="ChEBI" id="CHEBI:57540"/>
        <dbReference type="ChEBI" id="CHEBI:57945"/>
        <dbReference type="EC" id="1.2.1.3"/>
    </reaction>
    <physiologicalReaction direction="left-to-right" evidence="1">
        <dbReference type="Rhea" id="RHEA:25295"/>
    </physiologicalReaction>
</comment>
<comment type="catalytic activity">
    <reaction evidence="1">
        <text>benzaldehyde + NAD(+) + H2O = benzoate + NADH + 2 H(+)</text>
        <dbReference type="Rhea" id="RHEA:11840"/>
        <dbReference type="ChEBI" id="CHEBI:15377"/>
        <dbReference type="ChEBI" id="CHEBI:15378"/>
        <dbReference type="ChEBI" id="CHEBI:16150"/>
        <dbReference type="ChEBI" id="CHEBI:17169"/>
        <dbReference type="ChEBI" id="CHEBI:57540"/>
        <dbReference type="ChEBI" id="CHEBI:57945"/>
        <dbReference type="EC" id="1.2.1.28"/>
    </reaction>
    <physiologicalReaction direction="left-to-right" evidence="1">
        <dbReference type="Rhea" id="RHEA:11841"/>
    </physiologicalReaction>
</comment>
<comment type="catalytic activity">
    <reaction evidence="4">
        <text>4-aminobutanal + NAD(+) + H2O = 4-aminobutanoate + NADH + 2 H(+)</text>
        <dbReference type="Rhea" id="RHEA:19105"/>
        <dbReference type="ChEBI" id="CHEBI:15377"/>
        <dbReference type="ChEBI" id="CHEBI:15378"/>
        <dbReference type="ChEBI" id="CHEBI:57540"/>
        <dbReference type="ChEBI" id="CHEBI:57945"/>
        <dbReference type="ChEBI" id="CHEBI:58264"/>
        <dbReference type="ChEBI" id="CHEBI:59888"/>
        <dbReference type="EC" id="1.2.1.19"/>
    </reaction>
    <physiologicalReaction direction="left-to-right" evidence="4">
        <dbReference type="Rhea" id="RHEA:19106"/>
    </physiologicalReaction>
</comment>
<comment type="activity regulation">
    <text evidence="10">Inhibited by chloral hydrate.</text>
</comment>
<comment type="biophysicochemical properties">
    <kinetics>
        <KM evidence="10">5.7 uM for 9-cis retinal (at pH 7.5 and 25 degrees Celsius)</KM>
        <KM evidence="10">9.8 uM for all-trans retinal (at pH 7.5 and 25 degrees Celsius)</KM>
        <KM evidence="10">10.5 uM for 11-cis retinal (at pH 7.5 and 25 degrees Celsius)</KM>
        <text evidence="10">Has more than 2-fold higher catalytic efficiency for 9-cis retinal compared to all-trans retinal and 11-cis retinal.</text>
    </kinetics>
</comment>
<comment type="pathway">
    <text evidence="10">Cofactor metabolism; retinol metabolism.</text>
</comment>
<comment type="subunit">
    <text evidence="1 5">Homotetramer (By similarity). Interacts with PRMT3; the interaction is direct, inhibits ALDH1A1 aldehyde dehydrogenase activity and is independent of the methyltransferase activity of PRMT3 (By similarity).</text>
</comment>
<comment type="subcellular location">
    <subcellularLocation>
        <location evidence="1">Cytoplasm</location>
        <location evidence="1">Cytosol</location>
    </subcellularLocation>
    <subcellularLocation>
        <location evidence="4">Cell projection</location>
        <location evidence="4">Axon</location>
    </subcellularLocation>
</comment>
<comment type="tissue specificity">
    <text evidence="11">Strongly expressed in kidney, lung, testis, intestine, stomach, and trachea, but weakly in the liver.</text>
</comment>
<comment type="PTM">
    <text evidence="15">The N-terminus is blocked most probably by acetylation.</text>
</comment>
<comment type="similarity">
    <text evidence="14">Belongs to the aldehyde dehydrogenase family.</text>
</comment>
<reference key="1">
    <citation type="journal article" date="1995" name="Gene">
        <title>Cloning of a cDNA encoding rat aldehyde dehydrogenase with high activity for retinal oxidation.</title>
        <authorList>
            <person name="Bhat P.V."/>
            <person name="Labrecque J."/>
            <person name="Boutin J.-M."/>
            <person name="Lacroix A."/>
            <person name="Yoshida A."/>
        </authorList>
    </citation>
    <scope>NUCLEOTIDE SEQUENCE [MRNA]</scope>
    <scope>TISSUE SPECIFICITY</scope>
    <source>
        <strain>Sprague-Dawley</strain>
        <tissue>Kidney</tissue>
    </source>
</reference>
<reference key="2">
    <citation type="journal article" date="1997" name="Adv. Exp. Med. Biol.">
        <title>A preliminary report on the cloning of a constitutively expressed rat liver cytosolic ALDH cDNA by PCR.</title>
        <authorList>
            <person name="Kathmann E.C."/>
            <person name="Lipsky J.J."/>
        </authorList>
    </citation>
    <scope>NUCLEOTIDE SEQUENCE [MRNA]</scope>
    <source>
        <strain>Sprague-Dawley</strain>
        <tissue>Liver</tissue>
    </source>
</reference>
<reference key="3">
    <citation type="journal article" date="1997" name="Biochem. Biophys. Res. Commun.">
        <title>Cloning of a cDNA encoding a constitutively expressed rat liver cytosolic aldehyde dehydrogenase.</title>
        <authorList>
            <person name="Kathmann E.C."/>
            <person name="Lipsky J.J."/>
        </authorList>
    </citation>
    <scope>NUCLEOTIDE SEQUENCE [MRNA]</scope>
    <source>
        <strain>Sprague-Dawley</strain>
        <tissue>Liver</tissue>
    </source>
</reference>
<reference key="4">
    <citation type="journal article" date="1997" name="Gene">
        <title>Cloning of a rat cDNA encoding retinal dehydrogenase isozyme type I and its expression in E. coli.</title>
        <authorList>
            <person name="Penzes P."/>
            <person name="Wang X."/>
            <person name="Sperkova Z."/>
            <person name="Napoli J.L."/>
        </authorList>
    </citation>
    <scope>NUCLEOTIDE SEQUENCE [MRNA]</scope>
    <source>
        <tissue>Liver</tissue>
    </source>
</reference>
<reference key="5">
    <citation type="journal article" date="2004" name="Genome Res.">
        <title>The status, quality, and expansion of the NIH full-length cDNA project: the Mammalian Gene Collection (MGC).</title>
        <authorList>
            <consortium name="The MGC Project Team"/>
        </authorList>
    </citation>
    <scope>NUCLEOTIDE SEQUENCE [LARGE SCALE MRNA]</scope>
    <source>
        <tissue>Pituitary</tissue>
    </source>
</reference>
<reference key="6">
    <citation type="journal article" date="1995" name="Biochem. J.">
        <title>A novel isoenzyme of aldehyde dehydrogenase specifically involved in the biosynthesis of 9-cis and all-trans retinoic acid.</title>
        <authorList>
            <person name="Labrecque J."/>
            <person name="Dumas F."/>
            <person name="Lacroix A."/>
            <person name="Bhat P.V."/>
        </authorList>
    </citation>
    <scope>PROTEIN SEQUENCE OF 2-19; 80-91; 96-121; 205-225; 237-258 AND 394-438</scope>
    <scope>FUNCTION</scope>
    <scope>CATALYTIC ACTIVITY</scope>
    <scope>ACTIVITY REGULATION</scope>
    <scope>PATHWAY</scope>
    <scope>BIOPHYSICOCHEMICAL PROPERTIES</scope>
    <source>
        <strain>Sprague-Dawley</strain>
        <tissue>Kidney</tissue>
    </source>
</reference>
<reference key="7">
    <citation type="journal article" date="2005" name="Invest. Ophthalmol. Vis. Sci.">
        <title>Role of aldehyde dehydrogenase isozymes in the defense of rat lens and human lens epithelial cells against oxidative stress.</title>
        <authorList>
            <person name="Choudhary S."/>
            <person name="Xiao T."/>
            <person name="Vergara L.A."/>
            <person name="Srivastava S."/>
            <person name="Nees D."/>
            <person name="Piatigorsky J."/>
            <person name="Ansari N.H."/>
        </authorList>
    </citation>
    <scope>FUNCTION</scope>
</reference>
<reference key="8">
    <citation type="journal article" date="2012" name="Nat. Commun.">
        <title>Quantitative maps of protein phosphorylation sites across 14 different rat organs and tissues.</title>
        <authorList>
            <person name="Lundby A."/>
            <person name="Secher A."/>
            <person name="Lage K."/>
            <person name="Nordsborg N.B."/>
            <person name="Dmytriyev A."/>
            <person name="Lundby C."/>
            <person name="Olsen J.V."/>
        </authorList>
    </citation>
    <scope>PHOSPHORYLATION [LARGE SCALE ANALYSIS] AT SER-413</scope>
    <scope>IDENTIFICATION BY MASS SPECTROMETRY [LARGE SCALE ANALYSIS]</scope>
</reference>
<evidence type="ECO:0000250" key="1">
    <source>
        <dbReference type="UniProtKB" id="P00352"/>
    </source>
</evidence>
<evidence type="ECO:0000250" key="2">
    <source>
        <dbReference type="UniProtKB" id="P15437"/>
    </source>
</evidence>
<evidence type="ECO:0000250" key="3">
    <source>
        <dbReference type="UniProtKB" id="P20000"/>
    </source>
</evidence>
<evidence type="ECO:0000250" key="4">
    <source>
        <dbReference type="UniProtKB" id="P24549"/>
    </source>
</evidence>
<evidence type="ECO:0000250" key="5">
    <source>
        <dbReference type="UniProtKB" id="P51977"/>
    </source>
</evidence>
<evidence type="ECO:0000250" key="6">
    <source>
        <dbReference type="UniProtKB" id="Q8HYE4"/>
    </source>
</evidence>
<evidence type="ECO:0000255" key="7">
    <source>
        <dbReference type="PROSITE-ProRule" id="PRU10007"/>
    </source>
</evidence>
<evidence type="ECO:0000255" key="8">
    <source>
        <dbReference type="PROSITE-ProRule" id="PRU10008"/>
    </source>
</evidence>
<evidence type="ECO:0000269" key="9">
    <source>
    </source>
</evidence>
<evidence type="ECO:0000269" key="10">
    <source>
    </source>
</evidence>
<evidence type="ECO:0000269" key="11">
    <source>
    </source>
</evidence>
<evidence type="ECO:0000303" key="12">
    <source>
    </source>
</evidence>
<evidence type="ECO:0000303" key="13">
    <source>
    </source>
</evidence>
<evidence type="ECO:0000305" key="14"/>
<evidence type="ECO:0000305" key="15">
    <source>
    </source>
</evidence>
<evidence type="ECO:0000312" key="16">
    <source>
        <dbReference type="RGD" id="2087"/>
    </source>
</evidence>
<evidence type="ECO:0007744" key="17">
    <source>
    </source>
</evidence>
<name>AL1A1_RAT</name>
<accession>P51647</accession>
<accession>O09184</accession>
<keyword id="KW-0007">Acetylation</keyword>
<keyword id="KW-0966">Cell projection</keyword>
<keyword id="KW-0963">Cytoplasm</keyword>
<keyword id="KW-0903">Direct protein sequencing</keyword>
<keyword id="KW-0443">Lipid metabolism</keyword>
<keyword id="KW-0520">NAD</keyword>
<keyword id="KW-0560">Oxidoreductase</keyword>
<keyword id="KW-0597">Phosphoprotein</keyword>
<keyword id="KW-1185">Reference proteome</keyword>
<sequence>MSSPAQPAVPAPLANLKIQHTKIFINNEWHDSVSGKKFPVLNPATEEVICHVEEGDKADVDKAVKAARQAFQIGSPWRTMDASERGRLLNKLADLMERDRLLLATIEAINGGKVFANAYLSDLGGSIKALKYCAGWADKIHGQTIPSDGDIFTFTRREPIGVCGQIIPWNFPLLMFIWKIGPALSCGNTVVVKPAEQTPLTALHMASLIKEAGFPPGVVNIVPGYGPTAGAAISSHMDVDKVAFTGSTQVGKLIKEAAGKSNLKRVTLELGGKSPCIVFADADLDIAVEFAHHGVFYHQGQCCVAASRIFVEESVYDEFVRKSVERAKKYVLGNPLTQGINQGPQIDKEQHDKILDLIESGKKEGAKLECGGGRWGNKGFFVQPTVFSNVTDEMRIAKEEIFGPVQQIMKFKSIDDVIKRANNTTYGLAAGVFTKDLDRAITVSSALQAGVVWVNCYMILSAQCPFGGFKMSGNGRELGEHGLYEYTELKTVAMKISQKNS</sequence>
<protein>
    <recommendedName>
        <fullName evidence="15">Aldehyde dehydrogenase 1A1</fullName>
        <ecNumber evidence="4">1.2.1.19</ecNumber>
        <ecNumber evidence="1">1.2.1.28</ecNumber>
        <ecNumber evidence="10">1.2.1.3</ecNumber>
        <ecNumber evidence="10">1.2.1.36</ecNumber>
    </recommendedName>
    <alternativeName>
        <fullName evidence="1">3-deoxyglucosone dehydrogenase</fullName>
    </alternativeName>
    <alternativeName>
        <fullName>ALDH-E1</fullName>
    </alternativeName>
    <alternativeName>
        <fullName>ALHDII</fullName>
    </alternativeName>
    <alternativeName>
        <fullName evidence="16">Aldehyde dehydrogenase family 1 member A1</fullName>
    </alternativeName>
    <alternativeName>
        <fullName evidence="12">Aldehyde dehydrogenase, cytosolic</fullName>
    </alternativeName>
    <alternativeName>
        <fullName evidence="14">Retinal dehydrogenase 1</fullName>
        <shortName evidence="13">RALDH 1</shortName>
        <shortName evidence="13">RalDH1</shortName>
    </alternativeName>
</protein>